<sequence>MLIRHAPDLTDNDVTDHSLYLKRRTLMAGVAGLGVAGASASHAQAGLTFSRGFSTTEKPTSKEDITTYNNFYEFGVDKSDPAENSGKFKPRPWTVRIDGACEAPRTVGIEDLIGKNKLEERIYRMRCVEGWSMVIPWVGFPLKDLLASVKPTSKAKFVAFETVMRPSEMPGQAWNTLDWPYREGLRIDEAMHPLTLMAVGLYGDVLPNQNGAPLRLVVPWKYGFKGIKSIVRISLVEKQPVTSWNVLAPREYGFYSNVNPAVDHPRWSQATERRIGEFRRRETLAFNGYGEWVADMYRSMDLKRFY</sequence>
<accession>Q9A4T2</accession>
<organism>
    <name type="scientific">Caulobacter vibrioides (strain ATCC 19089 / CIP 103742 / CB 15)</name>
    <name type="common">Caulobacter crescentus</name>
    <dbReference type="NCBI Taxonomy" id="190650"/>
    <lineage>
        <taxon>Bacteria</taxon>
        <taxon>Pseudomonadati</taxon>
        <taxon>Pseudomonadota</taxon>
        <taxon>Alphaproteobacteria</taxon>
        <taxon>Caulobacterales</taxon>
        <taxon>Caulobacteraceae</taxon>
        <taxon>Caulobacter</taxon>
    </lineage>
</organism>
<proteinExistence type="inferred from homology"/>
<keyword id="KW-0479">Metal-binding</keyword>
<keyword id="KW-0500">Molybdenum</keyword>
<keyword id="KW-0560">Oxidoreductase</keyword>
<keyword id="KW-0574">Periplasm</keyword>
<keyword id="KW-1185">Reference proteome</keyword>
<keyword id="KW-0732">Signal</keyword>
<evidence type="ECO:0000255" key="1">
    <source>
        <dbReference type="HAMAP-Rule" id="MF_01206"/>
    </source>
</evidence>
<evidence type="ECO:0000305" key="2"/>
<dbReference type="EC" id="1.8.5.-" evidence="1"/>
<dbReference type="EMBL" id="AE005673">
    <property type="protein sequence ID" value="AAK24712.1"/>
    <property type="status" value="ALT_INIT"/>
    <property type="molecule type" value="Genomic_DNA"/>
</dbReference>
<dbReference type="PIR" id="D87589">
    <property type="entry name" value="D87589"/>
</dbReference>
<dbReference type="RefSeq" id="NP_421544.1">
    <property type="nucleotide sequence ID" value="NC_002696.2"/>
</dbReference>
<dbReference type="RefSeq" id="WP_010920589.1">
    <property type="nucleotide sequence ID" value="NC_002696.2"/>
</dbReference>
<dbReference type="SMR" id="Q9A4T2"/>
<dbReference type="STRING" id="190650.CC_2748"/>
<dbReference type="EnsemblBacteria" id="AAK24712">
    <property type="protein sequence ID" value="AAK24712"/>
    <property type="gene ID" value="CC_2748"/>
</dbReference>
<dbReference type="KEGG" id="ccr:CC_2748"/>
<dbReference type="PATRIC" id="fig|190650.5.peg.2749"/>
<dbReference type="eggNOG" id="COG2041">
    <property type="taxonomic scope" value="Bacteria"/>
</dbReference>
<dbReference type="HOGENOM" id="CLU_045520_0_0_5"/>
<dbReference type="Proteomes" id="UP000001816">
    <property type="component" value="Chromosome"/>
</dbReference>
<dbReference type="GO" id="GO:0042597">
    <property type="term" value="C:periplasmic space"/>
    <property type="evidence" value="ECO:0007669"/>
    <property type="project" value="UniProtKB-SubCell"/>
</dbReference>
<dbReference type="GO" id="GO:0046872">
    <property type="term" value="F:metal ion binding"/>
    <property type="evidence" value="ECO:0007669"/>
    <property type="project" value="UniProtKB-KW"/>
</dbReference>
<dbReference type="GO" id="GO:0043546">
    <property type="term" value="F:molybdopterin cofactor binding"/>
    <property type="evidence" value="ECO:0007669"/>
    <property type="project" value="UniProtKB-UniRule"/>
</dbReference>
<dbReference type="GO" id="GO:0016672">
    <property type="term" value="F:oxidoreductase activity, acting on a sulfur group of donors, quinone or similar compound as acceptor"/>
    <property type="evidence" value="ECO:0007669"/>
    <property type="project" value="UniProtKB-UniRule"/>
</dbReference>
<dbReference type="GO" id="GO:0030091">
    <property type="term" value="P:protein repair"/>
    <property type="evidence" value="ECO:0007669"/>
    <property type="project" value="UniProtKB-UniRule"/>
</dbReference>
<dbReference type="Gene3D" id="3.90.420.10">
    <property type="entry name" value="Oxidoreductase, molybdopterin-binding domain"/>
    <property type="match status" value="1"/>
</dbReference>
<dbReference type="HAMAP" id="MF_01206">
    <property type="entry name" value="MsrP"/>
    <property type="match status" value="1"/>
</dbReference>
<dbReference type="InterPro" id="IPR022867">
    <property type="entry name" value="MsrP"/>
</dbReference>
<dbReference type="InterPro" id="IPR000572">
    <property type="entry name" value="OxRdtase_Mopterin-bd_dom"/>
</dbReference>
<dbReference type="InterPro" id="IPR036374">
    <property type="entry name" value="OxRdtase_Mopterin-bd_sf"/>
</dbReference>
<dbReference type="InterPro" id="IPR006311">
    <property type="entry name" value="TAT_signal"/>
</dbReference>
<dbReference type="NCBIfam" id="NF003767">
    <property type="entry name" value="PRK05363.1"/>
    <property type="match status" value="1"/>
</dbReference>
<dbReference type="PANTHER" id="PTHR43032">
    <property type="entry name" value="PROTEIN-METHIONINE-SULFOXIDE REDUCTASE"/>
    <property type="match status" value="1"/>
</dbReference>
<dbReference type="PANTHER" id="PTHR43032:SF3">
    <property type="entry name" value="PROTEIN-METHIONINE-SULFOXIDE REDUCTASE CATALYTIC SUBUNIT MSRP"/>
    <property type="match status" value="1"/>
</dbReference>
<dbReference type="Pfam" id="PF00174">
    <property type="entry name" value="Oxidored_molyb"/>
    <property type="match status" value="1"/>
</dbReference>
<dbReference type="SUPFAM" id="SSF56524">
    <property type="entry name" value="Oxidoreductase molybdopterin-binding domain"/>
    <property type="match status" value="1"/>
</dbReference>
<dbReference type="PROSITE" id="PS51318">
    <property type="entry name" value="TAT"/>
    <property type="match status" value="1"/>
</dbReference>
<protein>
    <recommendedName>
        <fullName evidence="1">Protein-methionine-sulfoxide reductase catalytic subunit MsrP</fullName>
        <ecNumber evidence="1">1.8.5.-</ecNumber>
    </recommendedName>
</protein>
<gene>
    <name evidence="1" type="primary">msrP</name>
    <name type="ordered locus">CC_2748</name>
</gene>
<comment type="function">
    <text evidence="1">Part of the MsrPQ system that repairs oxidized periplasmic proteins containing methionine sulfoxide residues (Met-O), using respiratory chain electrons. Thus protects these proteins from oxidative-stress damage caused by reactive species of oxygen and chlorine generated by the host defense mechanisms. MsrPQ is essential for the maintenance of envelope integrity under bleach stress, rescuing a wide series of structurally unrelated periplasmic proteins from methionine oxidation. The catalytic subunit MsrP is non-stereospecific, being able to reduce both (R-) and (S-) diastereoisomers of methionine sulfoxide.</text>
</comment>
<comment type="catalytic activity">
    <reaction evidence="1">
        <text>L-methionyl-[protein] + a quinone + H2O = L-methionyl-(S)-S-oxide-[protein] + a quinol</text>
        <dbReference type="Rhea" id="RHEA:51292"/>
        <dbReference type="Rhea" id="RHEA-COMP:12313"/>
        <dbReference type="Rhea" id="RHEA-COMP:12315"/>
        <dbReference type="ChEBI" id="CHEBI:15377"/>
        <dbReference type="ChEBI" id="CHEBI:16044"/>
        <dbReference type="ChEBI" id="CHEBI:24646"/>
        <dbReference type="ChEBI" id="CHEBI:44120"/>
        <dbReference type="ChEBI" id="CHEBI:132124"/>
    </reaction>
</comment>
<comment type="catalytic activity">
    <reaction evidence="1">
        <text>L-methionyl-[protein] + a quinone + H2O = L-methionyl-(R)-S-oxide-[protein] + a quinol</text>
        <dbReference type="Rhea" id="RHEA:51296"/>
        <dbReference type="Rhea" id="RHEA-COMP:12313"/>
        <dbReference type="Rhea" id="RHEA-COMP:12314"/>
        <dbReference type="ChEBI" id="CHEBI:15377"/>
        <dbReference type="ChEBI" id="CHEBI:16044"/>
        <dbReference type="ChEBI" id="CHEBI:24646"/>
        <dbReference type="ChEBI" id="CHEBI:45764"/>
        <dbReference type="ChEBI" id="CHEBI:132124"/>
    </reaction>
</comment>
<comment type="cofactor">
    <cofactor evidence="1">
        <name>Mo-molybdopterin</name>
        <dbReference type="ChEBI" id="CHEBI:71302"/>
    </cofactor>
    <text evidence="1">Binds 1 Mo-molybdopterin (Mo-MPT) cofactor per subunit.</text>
</comment>
<comment type="subunit">
    <text evidence="1">Heterodimer of a catalytic subunit (MsrP) and a heme-binding subunit (MsrQ).</text>
</comment>
<comment type="subcellular location">
    <subcellularLocation>
        <location evidence="1">Periplasm</location>
    </subcellularLocation>
    <text evidence="1">Is attached to the inner membrane when interacting with the MsrQ subunit.</text>
</comment>
<comment type="PTM">
    <text evidence="1">Predicted to be exported by the Tat system. The position of the signal peptide cleavage has not been experimentally proven.</text>
</comment>
<comment type="similarity">
    <text evidence="1">Belongs to the MsrP family.</text>
</comment>
<comment type="sequence caution" evidence="2">
    <conflict type="erroneous initiation">
        <sequence resource="EMBL-CDS" id="AAK24712"/>
    </conflict>
</comment>
<feature type="signal peptide" description="Tat-type signal" evidence="1">
    <location>
        <begin position="1"/>
        <end position="45"/>
    </location>
</feature>
<feature type="chain" id="PRO_0000070681" description="Protein-methionine-sulfoxide reductase catalytic subunit MsrP" evidence="1">
    <location>
        <begin position="46"/>
        <end position="306"/>
    </location>
</feature>
<feature type="binding site" evidence="1">
    <location>
        <position position="69"/>
    </location>
    <ligand>
        <name>Mo-molybdopterin</name>
        <dbReference type="ChEBI" id="CHEBI:71302"/>
    </ligand>
</feature>
<feature type="binding site" evidence="1">
    <location>
        <begin position="72"/>
        <end position="73"/>
    </location>
    <ligand>
        <name>Mo-molybdopterin</name>
        <dbReference type="ChEBI" id="CHEBI:71302"/>
    </ligand>
</feature>
<feature type="binding site" evidence="1">
    <location>
        <position position="127"/>
    </location>
    <ligand>
        <name>Mo-molybdopterin</name>
        <dbReference type="ChEBI" id="CHEBI:71302"/>
    </ligand>
    <ligandPart>
        <name>Mo</name>
        <dbReference type="ChEBI" id="CHEBI:28685"/>
    </ligandPart>
</feature>
<feature type="binding site" evidence="1">
    <location>
        <position position="162"/>
    </location>
    <ligand>
        <name>Mo-molybdopterin</name>
        <dbReference type="ChEBI" id="CHEBI:71302"/>
    </ligand>
</feature>
<feature type="binding site" evidence="1">
    <location>
        <position position="210"/>
    </location>
    <ligand>
        <name>Mo-molybdopterin</name>
        <dbReference type="ChEBI" id="CHEBI:71302"/>
    </ligand>
</feature>
<feature type="binding site" evidence="1">
    <location>
        <position position="215"/>
    </location>
    <ligand>
        <name>Mo-molybdopterin</name>
        <dbReference type="ChEBI" id="CHEBI:71302"/>
    </ligand>
</feature>
<feature type="binding site" evidence="1">
    <location>
        <begin position="226"/>
        <end position="228"/>
    </location>
    <ligand>
        <name>Mo-molybdopterin</name>
        <dbReference type="ChEBI" id="CHEBI:71302"/>
    </ligand>
</feature>
<reference key="1">
    <citation type="journal article" date="2001" name="Proc. Natl. Acad. Sci. U.S.A.">
        <title>Complete genome sequence of Caulobacter crescentus.</title>
        <authorList>
            <person name="Nierman W.C."/>
            <person name="Feldblyum T.V."/>
            <person name="Laub M.T."/>
            <person name="Paulsen I.T."/>
            <person name="Nelson K.E."/>
            <person name="Eisen J.A."/>
            <person name="Heidelberg J.F."/>
            <person name="Alley M.R.K."/>
            <person name="Ohta N."/>
            <person name="Maddock J.R."/>
            <person name="Potocka I."/>
            <person name="Nelson W.C."/>
            <person name="Newton A."/>
            <person name="Stephens C."/>
            <person name="Phadke N.D."/>
            <person name="Ely B."/>
            <person name="DeBoy R.T."/>
            <person name="Dodson R.J."/>
            <person name="Durkin A.S."/>
            <person name="Gwinn M.L."/>
            <person name="Haft D.H."/>
            <person name="Kolonay J.F."/>
            <person name="Smit J."/>
            <person name="Craven M.B."/>
            <person name="Khouri H.M."/>
            <person name="Shetty J."/>
            <person name="Berry K.J."/>
            <person name="Utterback T.R."/>
            <person name="Tran K."/>
            <person name="Wolf A.M."/>
            <person name="Vamathevan J.J."/>
            <person name="Ermolaeva M.D."/>
            <person name="White O."/>
            <person name="Salzberg S.L."/>
            <person name="Venter J.C."/>
            <person name="Shapiro L."/>
            <person name="Fraser C.M."/>
        </authorList>
    </citation>
    <scope>NUCLEOTIDE SEQUENCE [LARGE SCALE GENOMIC DNA]</scope>
    <source>
        <strain>ATCC 19089 / CIP 103742 / CB 15</strain>
    </source>
</reference>
<name>MSRP_CAUVC</name>